<comment type="function">
    <text evidence="1">Part of the ABC transporter complex CcmAB involved in the biogenesis of c-type cytochromes; once thought to export heme, this seems not to be the case, but its exact role is uncertain. Responsible for energy coupling to the transport system.</text>
</comment>
<comment type="catalytic activity">
    <reaction evidence="1">
        <text>heme b(in) + ATP + H2O = heme b(out) + ADP + phosphate + H(+)</text>
        <dbReference type="Rhea" id="RHEA:19261"/>
        <dbReference type="ChEBI" id="CHEBI:15377"/>
        <dbReference type="ChEBI" id="CHEBI:15378"/>
        <dbReference type="ChEBI" id="CHEBI:30616"/>
        <dbReference type="ChEBI" id="CHEBI:43474"/>
        <dbReference type="ChEBI" id="CHEBI:60344"/>
        <dbReference type="ChEBI" id="CHEBI:456216"/>
        <dbReference type="EC" id="7.6.2.5"/>
    </reaction>
</comment>
<comment type="subunit">
    <text evidence="1">The complex is composed of two ATP-binding proteins (CcmA) and two transmembrane proteins (CcmB).</text>
</comment>
<comment type="subcellular location">
    <subcellularLocation>
        <location evidence="1">Cell inner membrane</location>
        <topology evidence="1">Peripheral membrane protein</topology>
    </subcellularLocation>
</comment>
<comment type="similarity">
    <text evidence="1">Belongs to the ABC transporter superfamily. CcmA exporter (TC 3.A.1.107) family.</text>
</comment>
<comment type="sequence caution" evidence="2">
    <conflict type="erroneous initiation">
        <sequence resource="EMBL-CDS" id="AAZ88906"/>
    </conflict>
</comment>
<feature type="chain" id="PRO_0000271961" description="Cytochrome c biogenesis ATP-binding export protein CcmA">
    <location>
        <begin position="1"/>
        <end position="207"/>
    </location>
</feature>
<feature type="domain" description="ABC transporter" evidence="1">
    <location>
        <begin position="4"/>
        <end position="207"/>
    </location>
</feature>
<feature type="binding site" evidence="1">
    <location>
        <begin position="36"/>
        <end position="43"/>
    </location>
    <ligand>
        <name>ATP</name>
        <dbReference type="ChEBI" id="CHEBI:30616"/>
    </ligand>
</feature>
<sequence>MGMLEARELLCERDERTLFSGLSFTLNAGEWVQITGSNGAGKTTLLRLLTGLSRPDAGEVLWQGQPLHQVRDSYHQNLLWIGHQPGIKTRLTALENLHFYHRDGDTAQCLEALAQAGLAGFDDIPVNQLSAGQQRRVALARLWLTRATLWILDEPFTAIDVNGVDRLTQRMAQHTEQGGIVILTTHQPLNVAESKIRRISLTQTRAA</sequence>
<keyword id="KW-0067">ATP-binding</keyword>
<keyword id="KW-0997">Cell inner membrane</keyword>
<keyword id="KW-1003">Cell membrane</keyword>
<keyword id="KW-0201">Cytochrome c-type biogenesis</keyword>
<keyword id="KW-0472">Membrane</keyword>
<keyword id="KW-0547">Nucleotide-binding</keyword>
<keyword id="KW-1185">Reference proteome</keyword>
<keyword id="KW-1278">Translocase</keyword>
<keyword id="KW-0813">Transport</keyword>
<gene>
    <name evidence="1" type="primary">ccmA</name>
    <name type="ordered locus">SSON_2259</name>
</gene>
<protein>
    <recommendedName>
        <fullName evidence="1">Cytochrome c biogenesis ATP-binding export protein CcmA</fullName>
        <ecNumber evidence="1">7.6.2.5</ecNumber>
    </recommendedName>
    <alternativeName>
        <fullName evidence="1">Heme exporter protein A</fullName>
    </alternativeName>
</protein>
<organism>
    <name type="scientific">Shigella sonnei (strain Ss046)</name>
    <dbReference type="NCBI Taxonomy" id="300269"/>
    <lineage>
        <taxon>Bacteria</taxon>
        <taxon>Pseudomonadati</taxon>
        <taxon>Pseudomonadota</taxon>
        <taxon>Gammaproteobacteria</taxon>
        <taxon>Enterobacterales</taxon>
        <taxon>Enterobacteriaceae</taxon>
        <taxon>Shigella</taxon>
    </lineage>
</organism>
<dbReference type="EC" id="7.6.2.5" evidence="1"/>
<dbReference type="EMBL" id="CP000038">
    <property type="protein sequence ID" value="AAZ88906.1"/>
    <property type="status" value="ALT_INIT"/>
    <property type="molecule type" value="Genomic_DNA"/>
</dbReference>
<dbReference type="RefSeq" id="WP_000525582.1">
    <property type="nucleotide sequence ID" value="NC_007384.1"/>
</dbReference>
<dbReference type="SMR" id="Q3Z006"/>
<dbReference type="GeneID" id="93774977"/>
<dbReference type="KEGG" id="ssn:SSON_2259"/>
<dbReference type="HOGENOM" id="CLU_000604_1_2_6"/>
<dbReference type="Proteomes" id="UP000002529">
    <property type="component" value="Chromosome"/>
</dbReference>
<dbReference type="GO" id="GO:0005886">
    <property type="term" value="C:plasma membrane"/>
    <property type="evidence" value="ECO:0007669"/>
    <property type="project" value="UniProtKB-SubCell"/>
</dbReference>
<dbReference type="GO" id="GO:0015439">
    <property type="term" value="F:ABC-type heme transporter activity"/>
    <property type="evidence" value="ECO:0007669"/>
    <property type="project" value="UniProtKB-EC"/>
</dbReference>
<dbReference type="GO" id="GO:0005524">
    <property type="term" value="F:ATP binding"/>
    <property type="evidence" value="ECO:0007669"/>
    <property type="project" value="UniProtKB-KW"/>
</dbReference>
<dbReference type="GO" id="GO:0016887">
    <property type="term" value="F:ATP hydrolysis activity"/>
    <property type="evidence" value="ECO:0007669"/>
    <property type="project" value="InterPro"/>
</dbReference>
<dbReference type="GO" id="GO:0017004">
    <property type="term" value="P:cytochrome complex assembly"/>
    <property type="evidence" value="ECO:0007669"/>
    <property type="project" value="UniProtKB-KW"/>
</dbReference>
<dbReference type="CDD" id="cd03231">
    <property type="entry name" value="ABC_CcmA_heme_exporter"/>
    <property type="match status" value="1"/>
</dbReference>
<dbReference type="FunFam" id="3.40.50.300:FF:001098">
    <property type="entry name" value="Cytochrome c biogenesis ATP-binding export protein CcmA"/>
    <property type="match status" value="1"/>
</dbReference>
<dbReference type="Gene3D" id="3.40.50.300">
    <property type="entry name" value="P-loop containing nucleotide triphosphate hydrolases"/>
    <property type="match status" value="1"/>
</dbReference>
<dbReference type="InterPro" id="IPR003593">
    <property type="entry name" value="AAA+_ATPase"/>
</dbReference>
<dbReference type="InterPro" id="IPR003439">
    <property type="entry name" value="ABC_transporter-like_ATP-bd"/>
</dbReference>
<dbReference type="InterPro" id="IPR017871">
    <property type="entry name" value="ABC_transporter-like_CS"/>
</dbReference>
<dbReference type="InterPro" id="IPR005895">
    <property type="entry name" value="ABC_transptr_haem_export_CcmA"/>
</dbReference>
<dbReference type="InterPro" id="IPR027417">
    <property type="entry name" value="P-loop_NTPase"/>
</dbReference>
<dbReference type="NCBIfam" id="TIGR01189">
    <property type="entry name" value="ccmA"/>
    <property type="match status" value="1"/>
</dbReference>
<dbReference type="NCBIfam" id="NF010061">
    <property type="entry name" value="PRK13538.1"/>
    <property type="match status" value="1"/>
</dbReference>
<dbReference type="PANTHER" id="PTHR43499">
    <property type="entry name" value="ABC TRANSPORTER I FAMILY MEMBER 1"/>
    <property type="match status" value="1"/>
</dbReference>
<dbReference type="PANTHER" id="PTHR43499:SF1">
    <property type="entry name" value="ABC TRANSPORTER I FAMILY MEMBER 1"/>
    <property type="match status" value="1"/>
</dbReference>
<dbReference type="Pfam" id="PF00005">
    <property type="entry name" value="ABC_tran"/>
    <property type="match status" value="1"/>
</dbReference>
<dbReference type="SMART" id="SM00382">
    <property type="entry name" value="AAA"/>
    <property type="match status" value="1"/>
</dbReference>
<dbReference type="SUPFAM" id="SSF52540">
    <property type="entry name" value="P-loop containing nucleoside triphosphate hydrolases"/>
    <property type="match status" value="1"/>
</dbReference>
<dbReference type="PROSITE" id="PS00211">
    <property type="entry name" value="ABC_TRANSPORTER_1"/>
    <property type="match status" value="1"/>
</dbReference>
<dbReference type="PROSITE" id="PS50893">
    <property type="entry name" value="ABC_TRANSPORTER_2"/>
    <property type="match status" value="1"/>
</dbReference>
<dbReference type="PROSITE" id="PS51243">
    <property type="entry name" value="CCMA"/>
    <property type="match status" value="1"/>
</dbReference>
<evidence type="ECO:0000255" key="1">
    <source>
        <dbReference type="HAMAP-Rule" id="MF_01707"/>
    </source>
</evidence>
<evidence type="ECO:0000305" key="2"/>
<name>CCMA_SHISS</name>
<accession>Q3Z006</accession>
<reference key="1">
    <citation type="journal article" date="2005" name="Nucleic Acids Res.">
        <title>Genome dynamics and diversity of Shigella species, the etiologic agents of bacillary dysentery.</title>
        <authorList>
            <person name="Yang F."/>
            <person name="Yang J."/>
            <person name="Zhang X."/>
            <person name="Chen L."/>
            <person name="Jiang Y."/>
            <person name="Yan Y."/>
            <person name="Tang X."/>
            <person name="Wang J."/>
            <person name="Xiong Z."/>
            <person name="Dong J."/>
            <person name="Xue Y."/>
            <person name="Zhu Y."/>
            <person name="Xu X."/>
            <person name="Sun L."/>
            <person name="Chen S."/>
            <person name="Nie H."/>
            <person name="Peng J."/>
            <person name="Xu J."/>
            <person name="Wang Y."/>
            <person name="Yuan Z."/>
            <person name="Wen Y."/>
            <person name="Yao Z."/>
            <person name="Shen Y."/>
            <person name="Qiang B."/>
            <person name="Hou Y."/>
            <person name="Yu J."/>
            <person name="Jin Q."/>
        </authorList>
    </citation>
    <scope>NUCLEOTIDE SEQUENCE [LARGE SCALE GENOMIC DNA]</scope>
    <source>
        <strain>Ss046</strain>
    </source>
</reference>
<proteinExistence type="inferred from homology"/>